<name>PAF15_RAT</name>
<protein>
    <recommendedName>
        <fullName evidence="5">PCNA-associated factor</fullName>
    </recommendedName>
    <alternativeName>
        <fullName>HCV NS5A-transactivated protein 9 homolog</fullName>
    </alternativeName>
    <alternativeName>
        <fullName>PCNA-associated factor of 15 kDa</fullName>
        <shortName>PAF15</shortName>
        <shortName>p15PAF</shortName>
    </alternativeName>
    <alternativeName>
        <fullName evidence="2">PCNA-clamp-associated factor</fullName>
    </alternativeName>
</protein>
<proteinExistence type="inferred from homology"/>
<reference key="1">
    <citation type="submission" date="2003-12" db="EMBL/GenBank/DDBJ databases">
        <title>Rattus norvegicus homologous cDNA to Homo sapiens NS5ATP9 gene.</title>
        <authorList>
            <person name="Cheng J."/>
            <person name="Liu Y."/>
            <person name="Li Q."/>
        </authorList>
    </citation>
    <scope>NUCLEOTIDE SEQUENCE [MRNA]</scope>
</reference>
<organism>
    <name type="scientific">Rattus norvegicus</name>
    <name type="common">Rat</name>
    <dbReference type="NCBI Taxonomy" id="10116"/>
    <lineage>
        <taxon>Eukaryota</taxon>
        <taxon>Metazoa</taxon>
        <taxon>Chordata</taxon>
        <taxon>Craniata</taxon>
        <taxon>Vertebrata</taxon>
        <taxon>Euteleostomi</taxon>
        <taxon>Mammalia</taxon>
        <taxon>Eutheria</taxon>
        <taxon>Euarchontoglires</taxon>
        <taxon>Glires</taxon>
        <taxon>Rodentia</taxon>
        <taxon>Myomorpha</taxon>
        <taxon>Muroidea</taxon>
        <taxon>Muridae</taxon>
        <taxon>Murinae</taxon>
        <taxon>Rattus</taxon>
    </lineage>
</organism>
<evidence type="ECO:0000250" key="1"/>
<evidence type="ECO:0000250" key="2">
    <source>
        <dbReference type="UniProtKB" id="Q15004"/>
    </source>
</evidence>
<evidence type="ECO:0000250" key="3">
    <source>
        <dbReference type="UniProtKB" id="Q9CQX4"/>
    </source>
</evidence>
<evidence type="ECO:0000256" key="4">
    <source>
        <dbReference type="SAM" id="MobiDB-lite"/>
    </source>
</evidence>
<evidence type="ECO:0000305" key="5"/>
<accession>Q6RIA2</accession>
<keyword id="KW-0007">Acetylation</keyword>
<keyword id="KW-0963">Cytoplasm</keyword>
<keyword id="KW-0227">DNA damage</keyword>
<keyword id="KW-0234">DNA repair</keyword>
<keyword id="KW-1017">Isopeptide bond</keyword>
<keyword id="KW-0539">Nucleus</keyword>
<keyword id="KW-0597">Phosphoprotein</keyword>
<keyword id="KW-1185">Reference proteome</keyword>
<keyword id="KW-0832">Ubl conjugation</keyword>
<comment type="function">
    <text evidence="1">PCNA-binding protein that acts as a regulator of DNA repair during DNA replication. Following DNA damage, the interaction with PCNA is disrupted, facilitating the interaction between monoubiquitinated PCNA and the translesion DNA synthesis DNA polymerase eta (POLH) at stalled replisomes, facilitating the bypass of replication-fork-blocking lesions. Also acts as a regulator of centrosome number (By similarity).</text>
</comment>
<comment type="subunit">
    <text evidence="1">Interacts (when monoubiquitinated at Lys-15 and Lys-24) with PCNA. Interacts with isoform 2/p33ING1b of ING1. Interacts with BRCA1 (By similarity).</text>
</comment>
<comment type="subcellular location">
    <subcellularLocation>
        <location evidence="2">Nucleus</location>
    </subcellularLocation>
    <subcellularLocation>
        <location evidence="2">Cytoplasm</location>
        <location evidence="2">Perinuclear region</location>
    </subcellularLocation>
    <text evidence="2">Following DNA damage, localizes to DNA damage sites. Colocalizes with centrosomes in perinuclear region.</text>
</comment>
<comment type="domain">
    <text evidence="1">The PIP-box mediates the interaction with PCNA.</text>
</comment>
<comment type="domain">
    <text evidence="1">The KEN box is required for the association with the APC/C complex.</text>
</comment>
<comment type="domain">
    <text evidence="1">The D-box (destruction box) mediates the interaction with APC/C proteins, and acts as a recognition signal for degradation via the ubiquitin-proteasome pathway.</text>
</comment>
<comment type="domain">
    <text evidence="1">The initiation motif is required for efficient chain initiation by the APC/C complex E2 ligase UBE2C. It determines the rate of substrate's degradation without affecting its affinity for the APC/C, a mechanism used by the APC/C to control the timing of substrate proteolysis during the cell cycle (By similarity).</text>
</comment>
<comment type="PTM">
    <text evidence="1">Monoubiquitinated at Lys-15 and Lys-24 during normal S phase, promoting its association with PCNA. Also diubiquitinated at these 2 sites. Following DNA damage, monoubiquitin chains at Lys-15 and Lys-24 are probably extended, leading to disrupt the interaction with PCNA. Polyubiquitinated by the APC/C complex at the mitotic exit, leading to its degradation by the proteasome (By similarity).</text>
</comment>
<dbReference type="EMBL" id="AY496944">
    <property type="protein sequence ID" value="AAR90859.1"/>
    <property type="molecule type" value="mRNA"/>
</dbReference>
<dbReference type="RefSeq" id="NP_958821.1">
    <property type="nucleotide sequence ID" value="NM_201418.2"/>
</dbReference>
<dbReference type="RefSeq" id="XP_063121231.1">
    <property type="nucleotide sequence ID" value="XM_063265161.1"/>
</dbReference>
<dbReference type="RefSeq" id="XP_063121232.1">
    <property type="nucleotide sequence ID" value="XM_063265162.1"/>
</dbReference>
<dbReference type="FunCoup" id="Q6RIA2">
    <property type="interactions" value="682"/>
</dbReference>
<dbReference type="STRING" id="10116.ENSRNOP00000022256"/>
<dbReference type="iPTMnet" id="Q6RIA2"/>
<dbReference type="PhosphoSitePlus" id="Q6RIA2"/>
<dbReference type="PaxDb" id="10116-ENSRNOP00000022256"/>
<dbReference type="GeneID" id="300795"/>
<dbReference type="KEGG" id="rno:300795"/>
<dbReference type="UCSC" id="RGD:1303041">
    <property type="organism name" value="rat"/>
</dbReference>
<dbReference type="AGR" id="RGD:1303041"/>
<dbReference type="CTD" id="9768"/>
<dbReference type="RGD" id="1303041">
    <property type="gene designation" value="Pclaf"/>
</dbReference>
<dbReference type="eggNOG" id="ENOG502S3UM">
    <property type="taxonomic scope" value="Eukaryota"/>
</dbReference>
<dbReference type="HOGENOM" id="CLU_142343_0_0_1"/>
<dbReference type="InParanoid" id="Q6RIA2"/>
<dbReference type="OrthoDB" id="7479084at2759"/>
<dbReference type="PhylomeDB" id="Q6RIA2"/>
<dbReference type="TreeFam" id="TF333199"/>
<dbReference type="Reactome" id="R-RNO-5656169">
    <property type="pathway name" value="Termination of translesion DNA synthesis"/>
</dbReference>
<dbReference type="PRO" id="PR:Q6RIA2"/>
<dbReference type="Proteomes" id="UP000002494">
    <property type="component" value="Chromosome 8"/>
</dbReference>
<dbReference type="Bgee" id="ENSRNOG00000016561">
    <property type="expression patterns" value="Expressed in thymus and 20 other cell types or tissues"/>
</dbReference>
<dbReference type="GO" id="GO:0005634">
    <property type="term" value="C:nucleus"/>
    <property type="evidence" value="ECO:0000250"/>
    <property type="project" value="UniProtKB"/>
</dbReference>
<dbReference type="GO" id="GO:0048471">
    <property type="term" value="C:perinuclear region of cytoplasm"/>
    <property type="evidence" value="ECO:0000250"/>
    <property type="project" value="UniProtKB"/>
</dbReference>
<dbReference type="GO" id="GO:0003682">
    <property type="term" value="F:chromatin binding"/>
    <property type="evidence" value="ECO:0000250"/>
    <property type="project" value="UniProtKB"/>
</dbReference>
<dbReference type="GO" id="GO:0060090">
    <property type="term" value="F:molecular adaptor activity"/>
    <property type="evidence" value="ECO:0000266"/>
    <property type="project" value="RGD"/>
</dbReference>
<dbReference type="GO" id="GO:0007098">
    <property type="term" value="P:centrosome cycle"/>
    <property type="evidence" value="ECO:0000250"/>
    <property type="project" value="UniProtKB"/>
</dbReference>
<dbReference type="GO" id="GO:0006974">
    <property type="term" value="P:DNA damage response"/>
    <property type="evidence" value="ECO:0000250"/>
    <property type="project" value="UniProtKB"/>
</dbReference>
<dbReference type="GO" id="GO:0006260">
    <property type="term" value="P:DNA replication"/>
    <property type="evidence" value="ECO:0000250"/>
    <property type="project" value="UniProtKB"/>
</dbReference>
<dbReference type="GO" id="GO:0051726">
    <property type="term" value="P:regulation of cell cycle"/>
    <property type="evidence" value="ECO:0000250"/>
    <property type="project" value="UniProtKB"/>
</dbReference>
<dbReference type="GO" id="GO:0009411">
    <property type="term" value="P:response to UV"/>
    <property type="evidence" value="ECO:0000250"/>
    <property type="project" value="UniProtKB"/>
</dbReference>
<dbReference type="GO" id="GO:0019985">
    <property type="term" value="P:translesion synthesis"/>
    <property type="evidence" value="ECO:0000250"/>
    <property type="project" value="UniProtKB"/>
</dbReference>
<dbReference type="InterPro" id="IPR040444">
    <property type="entry name" value="PCNA-AF"/>
</dbReference>
<dbReference type="InterPro" id="IPR031444">
    <property type="entry name" value="PCNA-AF_dom"/>
</dbReference>
<dbReference type="PANTHER" id="PTHR15679">
    <property type="entry name" value="PCNA-ASSOCIATED FACTOR"/>
    <property type="match status" value="1"/>
</dbReference>
<dbReference type="PANTHER" id="PTHR15679:SF8">
    <property type="entry name" value="PCNA-ASSOCIATED FACTOR"/>
    <property type="match status" value="1"/>
</dbReference>
<dbReference type="Pfam" id="PF15715">
    <property type="entry name" value="PAF"/>
    <property type="match status" value="1"/>
</dbReference>
<feature type="chain" id="PRO_0000096686" description="PCNA-associated factor">
    <location>
        <begin position="1"/>
        <end position="110"/>
    </location>
</feature>
<feature type="region of interest" description="Disordered" evidence="4">
    <location>
        <begin position="29"/>
        <end position="110"/>
    </location>
</feature>
<feature type="short sequence motif" description="D-box">
    <location>
        <begin position="23"/>
        <end position="34"/>
    </location>
</feature>
<feature type="short sequence motif" description="PIP-box">
    <location>
        <begin position="61"/>
        <end position="71"/>
    </location>
</feature>
<feature type="short sequence motif" description="KEN box">
    <location>
        <begin position="77"/>
        <end position="79"/>
    </location>
</feature>
<feature type="short sequence motif" description="Initiation motif">
    <location>
        <begin position="84"/>
        <end position="96"/>
    </location>
</feature>
<feature type="compositionally biased region" description="Low complexity" evidence="4">
    <location>
        <begin position="29"/>
        <end position="39"/>
    </location>
</feature>
<feature type="compositionally biased region" description="Basic and acidic residues" evidence="4">
    <location>
        <begin position="71"/>
        <end position="80"/>
    </location>
</feature>
<feature type="modified residue" description="N6-acetyllysine; alternate" evidence="3">
    <location>
        <position position="24"/>
    </location>
</feature>
<feature type="modified residue" description="Phosphoserine" evidence="2">
    <location>
        <position position="28"/>
    </location>
</feature>
<feature type="modified residue" description="Phosphoserine" evidence="2">
    <location>
        <position position="71"/>
    </location>
</feature>
<feature type="cross-link" description="Glycyl lysine isopeptide (Lys-Gly) (interchain with G-Cter in ubiquitin)" evidence="2">
    <location>
        <position position="15"/>
    </location>
</feature>
<feature type="cross-link" description="Glycyl lysine isopeptide (Lys-Gly) (interchain with G-Cter in ubiquitin); alternate" evidence="2">
    <location>
        <position position="24"/>
    </location>
</feature>
<sequence length="110" mass="12006">MVRTKANYVPGAYRKVVASQAPRKVLGSSTFVTNSSGSSRKAENKYAGGNPVCVRPTPKWQKGIGEFFRLSPKDSKKENQIPEEAGSSGLGKAKRKACPLQPDHRDDENE</sequence>
<gene>
    <name evidence="2" type="primary">Pclaf</name>
    <name type="synonym">Ns5atp9</name>
    <name type="synonym">Paf</name>
</gene>